<comment type="subcellular location">
    <subcellularLocation>
        <location evidence="2">Host membrane</location>
        <topology evidence="2">Single-pass type I membrane protein</topology>
    </subcellularLocation>
</comment>
<comment type="similarity">
    <text evidence="2">Belongs to the asfivirus B66L family.</text>
</comment>
<proteinExistence type="inferred from homology"/>
<dbReference type="EMBL" id="AY261366">
    <property type="status" value="NOT_ANNOTATED_CDS"/>
    <property type="molecule type" value="Genomic_DNA"/>
</dbReference>
<dbReference type="Proteomes" id="UP000000858">
    <property type="component" value="Segment"/>
</dbReference>
<dbReference type="GO" id="GO:0033644">
    <property type="term" value="C:host cell membrane"/>
    <property type="evidence" value="ECO:0007669"/>
    <property type="project" value="UniProtKB-SubCell"/>
</dbReference>
<dbReference type="GO" id="GO:0016020">
    <property type="term" value="C:membrane"/>
    <property type="evidence" value="ECO:0007669"/>
    <property type="project" value="UniProtKB-KW"/>
</dbReference>
<gene>
    <name type="ordered locus">War-097</name>
</gene>
<organism>
    <name type="scientific">African swine fever virus (isolate Warthog/Namibia/Wart80/1980)</name>
    <name type="common">ASFV</name>
    <dbReference type="NCBI Taxonomy" id="561444"/>
    <lineage>
        <taxon>Viruses</taxon>
        <taxon>Varidnaviria</taxon>
        <taxon>Bamfordvirae</taxon>
        <taxon>Nucleocytoviricota</taxon>
        <taxon>Pokkesviricetes</taxon>
        <taxon>Asfuvirales</taxon>
        <taxon>Asfarviridae</taxon>
        <taxon>Asfivirus</taxon>
        <taxon>African swine fever virus</taxon>
    </lineage>
</organism>
<sequence>MDIKRALILFLLFLVVLSNAFVDYIISNFNHAVTCRKPTYFGIVLQGIFLVILFSIVDYLINENIL</sequence>
<reference key="1">
    <citation type="submission" date="2003-03" db="EMBL/GenBank/DDBJ databases">
        <title>African swine fever virus genomes.</title>
        <authorList>
            <person name="Kutish G.F."/>
            <person name="Rock D.L."/>
        </authorList>
    </citation>
    <scope>NUCLEOTIDE SEQUENCE [LARGE SCALE GENOMIC DNA]</scope>
</reference>
<protein>
    <recommendedName>
        <fullName>Transmembrane protein B66L</fullName>
        <shortName>pB66L</shortName>
    </recommendedName>
</protein>
<keyword id="KW-1043">Host membrane</keyword>
<keyword id="KW-0472">Membrane</keyword>
<keyword id="KW-0732">Signal</keyword>
<keyword id="KW-0812">Transmembrane</keyword>
<keyword id="KW-1133">Transmembrane helix</keyword>
<accession>P0CAM3</accession>
<evidence type="ECO:0000255" key="1"/>
<evidence type="ECO:0000305" key="2"/>
<name>VFB66_ASFWA</name>
<feature type="signal peptide" evidence="1">
    <location>
        <begin position="1"/>
        <end position="20"/>
    </location>
</feature>
<feature type="chain" id="PRO_0000373755" description="Transmembrane protein B66L">
    <location>
        <begin position="21"/>
        <end position="66"/>
    </location>
</feature>
<feature type="topological domain" description="Extracellular" evidence="1">
    <location>
        <begin position="21"/>
        <end position="40"/>
    </location>
</feature>
<feature type="transmembrane region" description="Helical" evidence="1">
    <location>
        <begin position="41"/>
        <end position="61"/>
    </location>
</feature>
<feature type="topological domain" description="Cytoplasmic" evidence="1">
    <location>
        <begin position="62"/>
        <end position="66"/>
    </location>
</feature>
<organismHost>
    <name type="scientific">Ornithodoros</name>
    <name type="common">relapsing fever ticks</name>
    <dbReference type="NCBI Taxonomy" id="6937"/>
</organismHost>
<organismHost>
    <name type="scientific">Phacochoerus aethiopicus</name>
    <name type="common">Warthog</name>
    <dbReference type="NCBI Taxonomy" id="85517"/>
</organismHost>
<organismHost>
    <name type="scientific">Phacochoerus africanus</name>
    <name type="common">Warthog</name>
    <dbReference type="NCBI Taxonomy" id="41426"/>
</organismHost>
<organismHost>
    <name type="scientific">Potamochoerus larvatus</name>
    <name type="common">Bushpig</name>
    <dbReference type="NCBI Taxonomy" id="273792"/>
</organismHost>
<organismHost>
    <name type="scientific">Sus scrofa</name>
    <name type="common">Pig</name>
    <dbReference type="NCBI Taxonomy" id="9823"/>
</organismHost>